<comment type="function">
    <text evidence="1">Involved in pyrimidine catabolism. May facilitate the hydrolysis of carbamate, a reaction that can also occur spontaneously.</text>
</comment>
<comment type="catalytic activity">
    <reaction evidence="1">
        <text>carbamate + 2 H(+) = NH4(+) + CO2</text>
        <dbReference type="Rhea" id="RHEA:15649"/>
        <dbReference type="ChEBI" id="CHEBI:13941"/>
        <dbReference type="ChEBI" id="CHEBI:15378"/>
        <dbReference type="ChEBI" id="CHEBI:16526"/>
        <dbReference type="ChEBI" id="CHEBI:28938"/>
    </reaction>
</comment>
<comment type="similarity">
    <text evidence="1">Belongs to the AB hydrolase superfamily. Hydrolase RutD family.</text>
</comment>
<keyword id="KW-0002">3D-structure</keyword>
<keyword id="KW-0378">Hydrolase</keyword>
<accession>B6I985</accession>
<proteinExistence type="evidence at protein level"/>
<name>RUTD_ECOSE</name>
<feature type="chain" id="PRO_0000402944" description="Putative carbamate hydrolase RutD">
    <location>
        <begin position="1"/>
        <end position="266"/>
    </location>
</feature>
<feature type="strand" evidence="2">
    <location>
        <begin position="15"/>
        <end position="19"/>
    </location>
</feature>
<feature type="helix" evidence="2">
    <location>
        <begin position="26"/>
        <end position="29"/>
    </location>
</feature>
<feature type="helix" evidence="2">
    <location>
        <begin position="30"/>
        <end position="37"/>
    </location>
</feature>
<feature type="strand" evidence="2">
    <location>
        <begin position="40"/>
        <end position="44"/>
    </location>
</feature>
<feature type="helix" evidence="2">
    <location>
        <begin position="63"/>
        <end position="76"/>
    </location>
</feature>
<feature type="strand" evidence="2">
    <location>
        <begin position="81"/>
        <end position="87"/>
    </location>
</feature>
<feature type="helix" evidence="2">
    <location>
        <begin position="89"/>
        <end position="100"/>
    </location>
</feature>
<feature type="turn" evidence="2">
    <location>
        <begin position="102"/>
        <end position="104"/>
    </location>
</feature>
<feature type="strand" evidence="2">
    <location>
        <begin position="105"/>
        <end position="112"/>
    </location>
</feature>
<feature type="helix" evidence="2">
    <location>
        <begin position="119"/>
        <end position="148"/>
    </location>
</feature>
<feature type="helix" evidence="2">
    <location>
        <begin position="151"/>
        <end position="155"/>
    </location>
</feature>
<feature type="helix" evidence="2">
    <location>
        <begin position="158"/>
        <end position="170"/>
    </location>
</feature>
<feature type="helix" evidence="2">
    <location>
        <begin position="175"/>
        <end position="187"/>
    </location>
</feature>
<feature type="turn" evidence="2">
    <location>
        <begin position="191"/>
        <end position="193"/>
    </location>
</feature>
<feature type="helix" evidence="2">
    <location>
        <begin position="194"/>
        <end position="196"/>
    </location>
</feature>
<feature type="strand" evidence="2">
    <location>
        <begin position="201"/>
        <end position="206"/>
    </location>
</feature>
<feature type="strand" evidence="2">
    <location>
        <begin position="210"/>
        <end position="212"/>
    </location>
</feature>
<feature type="helix" evidence="2">
    <location>
        <begin position="215"/>
        <end position="223"/>
    </location>
</feature>
<feature type="strand" evidence="2">
    <location>
        <begin position="225"/>
        <end position="234"/>
    </location>
</feature>
<feature type="helix" evidence="2">
    <location>
        <begin position="239"/>
        <end position="242"/>
    </location>
</feature>
<feature type="helix" evidence="2">
    <location>
        <begin position="244"/>
        <end position="265"/>
    </location>
</feature>
<organism>
    <name type="scientific">Escherichia coli (strain SE11)</name>
    <dbReference type="NCBI Taxonomy" id="409438"/>
    <lineage>
        <taxon>Bacteria</taxon>
        <taxon>Pseudomonadati</taxon>
        <taxon>Pseudomonadota</taxon>
        <taxon>Gammaproteobacteria</taxon>
        <taxon>Enterobacterales</taxon>
        <taxon>Enterobacteriaceae</taxon>
        <taxon>Escherichia</taxon>
    </lineage>
</organism>
<evidence type="ECO:0000255" key="1">
    <source>
        <dbReference type="HAMAP-Rule" id="MF_00832"/>
    </source>
</evidence>
<evidence type="ECO:0007829" key="2">
    <source>
        <dbReference type="PDB" id="3V48"/>
    </source>
</evidence>
<protein>
    <recommendedName>
        <fullName evidence="1">Putative carbamate hydrolase RutD</fullName>
        <ecNumber evidence="1">3.5.1.-</ecNumber>
    </recommendedName>
    <alternativeName>
        <fullName evidence="1">Aminohydrolase</fullName>
    </alternativeName>
</protein>
<gene>
    <name evidence="1" type="primary">rutD</name>
    <name type="ordered locus">ECSE_1071</name>
</gene>
<reference key="1">
    <citation type="journal article" date="2008" name="DNA Res.">
        <title>Complete genome sequence and comparative analysis of the wild-type commensal Escherichia coli strain SE11 isolated from a healthy adult.</title>
        <authorList>
            <person name="Oshima K."/>
            <person name="Toh H."/>
            <person name="Ogura Y."/>
            <person name="Sasamoto H."/>
            <person name="Morita H."/>
            <person name="Park S.-H."/>
            <person name="Ooka T."/>
            <person name="Iyoda S."/>
            <person name="Taylor T.D."/>
            <person name="Hayashi T."/>
            <person name="Itoh K."/>
            <person name="Hattori M."/>
        </authorList>
    </citation>
    <scope>NUCLEOTIDE SEQUENCE [LARGE SCALE GENOMIC DNA]</scope>
    <source>
        <strain>SE11</strain>
    </source>
</reference>
<dbReference type="EC" id="3.5.1.-" evidence="1"/>
<dbReference type="EMBL" id="AP009240">
    <property type="protein sequence ID" value="BAG76595.1"/>
    <property type="molecule type" value="Genomic_DNA"/>
</dbReference>
<dbReference type="RefSeq" id="WP_000777653.1">
    <property type="nucleotide sequence ID" value="NC_011415.1"/>
</dbReference>
<dbReference type="PDB" id="3V48">
    <property type="method" value="X-ray"/>
    <property type="resolution" value="2.10 A"/>
    <property type="chains" value="A/B=1-266"/>
</dbReference>
<dbReference type="PDBsum" id="3V48"/>
<dbReference type="SMR" id="B6I985"/>
<dbReference type="ESTHER" id="ecoli-rutD">
    <property type="family name" value="RutD"/>
</dbReference>
<dbReference type="KEGG" id="ecy:ECSE_1071"/>
<dbReference type="HOGENOM" id="CLU_020336_50_1_6"/>
<dbReference type="EvolutionaryTrace" id="B6I985"/>
<dbReference type="Proteomes" id="UP000008199">
    <property type="component" value="Chromosome"/>
</dbReference>
<dbReference type="GO" id="GO:0016811">
    <property type="term" value="F:hydrolase activity, acting on carbon-nitrogen (but not peptide) bonds, in linear amides"/>
    <property type="evidence" value="ECO:0007669"/>
    <property type="project" value="InterPro"/>
</dbReference>
<dbReference type="GO" id="GO:0019740">
    <property type="term" value="P:nitrogen utilization"/>
    <property type="evidence" value="ECO:0007669"/>
    <property type="project" value="UniProtKB-UniRule"/>
</dbReference>
<dbReference type="GO" id="GO:0006212">
    <property type="term" value="P:uracil catabolic process"/>
    <property type="evidence" value="ECO:0007669"/>
    <property type="project" value="UniProtKB-UniRule"/>
</dbReference>
<dbReference type="FunFam" id="3.40.50.1820:FF:000052">
    <property type="entry name" value="Putative aminoacrylate hydrolase RutD"/>
    <property type="match status" value="1"/>
</dbReference>
<dbReference type="Gene3D" id="3.40.50.1820">
    <property type="entry name" value="alpha/beta hydrolase"/>
    <property type="match status" value="1"/>
</dbReference>
<dbReference type="HAMAP" id="MF_00832">
    <property type="entry name" value="RutD"/>
    <property type="match status" value="1"/>
</dbReference>
<dbReference type="InterPro" id="IPR000073">
    <property type="entry name" value="AB_hydrolase_1"/>
</dbReference>
<dbReference type="InterPro" id="IPR029058">
    <property type="entry name" value="AB_hydrolase_fold"/>
</dbReference>
<dbReference type="InterPro" id="IPR050266">
    <property type="entry name" value="AB_hydrolase_sf"/>
</dbReference>
<dbReference type="InterPro" id="IPR019913">
    <property type="entry name" value="Pyrimidine_utilisation_RutD"/>
</dbReference>
<dbReference type="NCBIfam" id="TIGR03611">
    <property type="entry name" value="RutD"/>
    <property type="match status" value="1"/>
</dbReference>
<dbReference type="PANTHER" id="PTHR43798">
    <property type="entry name" value="MONOACYLGLYCEROL LIPASE"/>
    <property type="match status" value="1"/>
</dbReference>
<dbReference type="Pfam" id="PF00561">
    <property type="entry name" value="Abhydrolase_1"/>
    <property type="match status" value="1"/>
</dbReference>
<dbReference type="PRINTS" id="PR00111">
    <property type="entry name" value="ABHYDROLASE"/>
</dbReference>
<dbReference type="SUPFAM" id="SSF53474">
    <property type="entry name" value="alpha/beta-Hydrolases"/>
    <property type="match status" value="1"/>
</dbReference>
<sequence length="266" mass="28898">MKLSLSPPPYADAPVVVLISGLGGSGSYWLPQLAVLEQEYQVVCYDQRGTGNNPDTLAEDYSIAQMAAELHQALVAAGIEHYAVVGHALGALVGMQLALDYPASVTVLISVNGWLRINAHTRRCFQVRERLLYSGGAQAWVEAQPLFLYPADWMAARAPRLEAEDALALAHFQGKNNLLRRLNALKRADFSHHADRIRCPVQIICASDDLLVPTACSSELHAALPDSQKMVMPYGGHACNVTDPETFNALLLNGLASLLHHREAAL</sequence>